<keyword id="KW-0004">4Fe-4S</keyword>
<keyword id="KW-0997">Cell inner membrane</keyword>
<keyword id="KW-1003">Cell membrane</keyword>
<keyword id="KW-0408">Iron</keyword>
<keyword id="KW-0411">Iron-sulfur</keyword>
<keyword id="KW-0472">Membrane</keyword>
<keyword id="KW-0479">Metal-binding</keyword>
<keyword id="KW-0520">NAD</keyword>
<keyword id="KW-0874">Quinone</keyword>
<keyword id="KW-0677">Repeat</keyword>
<keyword id="KW-1278">Translocase</keyword>
<accession>Q92G94</accession>
<protein>
    <recommendedName>
        <fullName evidence="1">NADH-quinone oxidoreductase subunit I</fullName>
        <ecNumber evidence="1">7.1.1.-</ecNumber>
    </recommendedName>
    <alternativeName>
        <fullName evidence="1">NADH dehydrogenase I subunit I</fullName>
    </alternativeName>
    <alternativeName>
        <fullName evidence="1">NDH-1 subunit I</fullName>
    </alternativeName>
</protein>
<comment type="function">
    <text evidence="1">NDH-1 shuttles electrons from NADH, via FMN and iron-sulfur (Fe-S) centers, to quinones in the respiratory chain. The immediate electron acceptor for the enzyme in this species is believed to be ubiquinone. Couples the redox reaction to proton translocation (for every two electrons transferred, four hydrogen ions are translocated across the cytoplasmic membrane), and thus conserves the redox energy in a proton gradient.</text>
</comment>
<comment type="catalytic activity">
    <reaction evidence="1">
        <text>a quinone + NADH + 5 H(+)(in) = a quinol + NAD(+) + 4 H(+)(out)</text>
        <dbReference type="Rhea" id="RHEA:57888"/>
        <dbReference type="ChEBI" id="CHEBI:15378"/>
        <dbReference type="ChEBI" id="CHEBI:24646"/>
        <dbReference type="ChEBI" id="CHEBI:57540"/>
        <dbReference type="ChEBI" id="CHEBI:57945"/>
        <dbReference type="ChEBI" id="CHEBI:132124"/>
    </reaction>
</comment>
<comment type="cofactor">
    <cofactor evidence="1">
        <name>[4Fe-4S] cluster</name>
        <dbReference type="ChEBI" id="CHEBI:49883"/>
    </cofactor>
    <text evidence="1">Binds 2 [4Fe-4S] clusters per subunit.</text>
</comment>
<comment type="subunit">
    <text evidence="1">NDH-1 is composed of 14 different subunits. Subunits NuoA, H, J, K, L, M, N constitute the membrane sector of the complex.</text>
</comment>
<comment type="subcellular location">
    <subcellularLocation>
        <location evidence="1">Cell inner membrane</location>
        <topology evidence="1">Peripheral membrane protein</topology>
    </subcellularLocation>
</comment>
<comment type="similarity">
    <text evidence="1">Belongs to the complex I 23 kDa subunit family.</text>
</comment>
<dbReference type="EC" id="7.1.1.-" evidence="1"/>
<dbReference type="EMBL" id="AE006914">
    <property type="protein sequence ID" value="AAL03767.1"/>
    <property type="molecule type" value="Genomic_DNA"/>
</dbReference>
<dbReference type="PIR" id="E97853">
    <property type="entry name" value="E97853"/>
</dbReference>
<dbReference type="RefSeq" id="WP_010977794.1">
    <property type="nucleotide sequence ID" value="NC_003103.1"/>
</dbReference>
<dbReference type="SMR" id="Q92G94"/>
<dbReference type="GeneID" id="928382"/>
<dbReference type="KEGG" id="rco:RC1229"/>
<dbReference type="PATRIC" id="fig|272944.4.peg.1408"/>
<dbReference type="HOGENOM" id="CLU_067218_5_1_5"/>
<dbReference type="Proteomes" id="UP000000816">
    <property type="component" value="Chromosome"/>
</dbReference>
<dbReference type="GO" id="GO:0005886">
    <property type="term" value="C:plasma membrane"/>
    <property type="evidence" value="ECO:0007669"/>
    <property type="project" value="UniProtKB-SubCell"/>
</dbReference>
<dbReference type="GO" id="GO:0051539">
    <property type="term" value="F:4 iron, 4 sulfur cluster binding"/>
    <property type="evidence" value="ECO:0007669"/>
    <property type="project" value="UniProtKB-KW"/>
</dbReference>
<dbReference type="GO" id="GO:0005506">
    <property type="term" value="F:iron ion binding"/>
    <property type="evidence" value="ECO:0007669"/>
    <property type="project" value="UniProtKB-UniRule"/>
</dbReference>
<dbReference type="GO" id="GO:0050136">
    <property type="term" value="F:NADH:ubiquinone reductase (non-electrogenic) activity"/>
    <property type="evidence" value="ECO:0007669"/>
    <property type="project" value="UniProtKB-UniRule"/>
</dbReference>
<dbReference type="GO" id="GO:0048038">
    <property type="term" value="F:quinone binding"/>
    <property type="evidence" value="ECO:0007669"/>
    <property type="project" value="UniProtKB-KW"/>
</dbReference>
<dbReference type="GO" id="GO:0009060">
    <property type="term" value="P:aerobic respiration"/>
    <property type="evidence" value="ECO:0007669"/>
    <property type="project" value="TreeGrafter"/>
</dbReference>
<dbReference type="FunFam" id="3.30.70.3270:FF:000001">
    <property type="entry name" value="NADH-quinone oxidoreductase subunit I 1"/>
    <property type="match status" value="1"/>
</dbReference>
<dbReference type="Gene3D" id="3.30.70.3270">
    <property type="match status" value="1"/>
</dbReference>
<dbReference type="HAMAP" id="MF_01351">
    <property type="entry name" value="NDH1_NuoI"/>
    <property type="match status" value="1"/>
</dbReference>
<dbReference type="InterPro" id="IPR017896">
    <property type="entry name" value="4Fe4S_Fe-S-bd"/>
</dbReference>
<dbReference type="InterPro" id="IPR017900">
    <property type="entry name" value="4Fe4S_Fe_S_CS"/>
</dbReference>
<dbReference type="InterPro" id="IPR010226">
    <property type="entry name" value="NADH_quinone_OxRdtase_chainI"/>
</dbReference>
<dbReference type="NCBIfam" id="TIGR01971">
    <property type="entry name" value="NuoI"/>
    <property type="match status" value="1"/>
</dbReference>
<dbReference type="NCBIfam" id="NF004538">
    <property type="entry name" value="PRK05888.1-4"/>
    <property type="match status" value="1"/>
</dbReference>
<dbReference type="NCBIfam" id="NF004539">
    <property type="entry name" value="PRK05888.1-5"/>
    <property type="match status" value="1"/>
</dbReference>
<dbReference type="PANTHER" id="PTHR10849:SF20">
    <property type="entry name" value="NADH DEHYDROGENASE [UBIQUINONE] IRON-SULFUR PROTEIN 8, MITOCHONDRIAL"/>
    <property type="match status" value="1"/>
</dbReference>
<dbReference type="PANTHER" id="PTHR10849">
    <property type="entry name" value="NADH DEHYDROGENASE UBIQUINONE IRON-SULFUR PROTEIN 8, MITOCHONDRIAL"/>
    <property type="match status" value="1"/>
</dbReference>
<dbReference type="Pfam" id="PF12838">
    <property type="entry name" value="Fer4_7"/>
    <property type="match status" value="1"/>
</dbReference>
<dbReference type="SUPFAM" id="SSF54862">
    <property type="entry name" value="4Fe-4S ferredoxins"/>
    <property type="match status" value="1"/>
</dbReference>
<dbReference type="PROSITE" id="PS00198">
    <property type="entry name" value="4FE4S_FER_1"/>
    <property type="match status" value="2"/>
</dbReference>
<dbReference type="PROSITE" id="PS51379">
    <property type="entry name" value="4FE4S_FER_2"/>
    <property type="match status" value="2"/>
</dbReference>
<sequence>MINYLKSFFLYEIVRGMVLTLKYFFKPKVTINYPYEKSPISPRFKGEHALRRYENGEERCIACKLCEAICPAQAIVIEADEREDGSRRTTRYDIDMTKCIYCGLCQEACPVDAIVEGPNFEFASLTHTALIYDKERLLQNGDRWEQALASKLHKDYEYR</sequence>
<reference key="1">
    <citation type="journal article" date="2001" name="Science">
        <title>Mechanisms of evolution in Rickettsia conorii and R. prowazekii.</title>
        <authorList>
            <person name="Ogata H."/>
            <person name="Audic S."/>
            <person name="Renesto-Audiffren P."/>
            <person name="Fournier P.-E."/>
            <person name="Barbe V."/>
            <person name="Samson D."/>
            <person name="Roux V."/>
            <person name="Cossart P."/>
            <person name="Weissenbach J."/>
            <person name="Claverie J.-M."/>
            <person name="Raoult D."/>
        </authorList>
    </citation>
    <scope>NUCLEOTIDE SEQUENCE [LARGE SCALE GENOMIC DNA]</scope>
    <source>
        <strain>ATCC VR-613 / Malish 7</strain>
    </source>
</reference>
<proteinExistence type="inferred from homology"/>
<evidence type="ECO:0000255" key="1">
    <source>
        <dbReference type="HAMAP-Rule" id="MF_01351"/>
    </source>
</evidence>
<name>NUOI_RICCN</name>
<feature type="chain" id="PRO_0000118731" description="NADH-quinone oxidoreductase subunit I">
    <location>
        <begin position="1"/>
        <end position="159"/>
    </location>
</feature>
<feature type="domain" description="4Fe-4S ferredoxin-type 1" evidence="1">
    <location>
        <begin position="51"/>
        <end position="80"/>
    </location>
</feature>
<feature type="domain" description="4Fe-4S ferredoxin-type 2" evidence="1">
    <location>
        <begin position="90"/>
        <end position="119"/>
    </location>
</feature>
<feature type="binding site" evidence="1">
    <location>
        <position position="60"/>
    </location>
    <ligand>
        <name>[4Fe-4S] cluster</name>
        <dbReference type="ChEBI" id="CHEBI:49883"/>
        <label>1</label>
    </ligand>
</feature>
<feature type="binding site" evidence="1">
    <location>
        <position position="63"/>
    </location>
    <ligand>
        <name>[4Fe-4S] cluster</name>
        <dbReference type="ChEBI" id="CHEBI:49883"/>
        <label>1</label>
    </ligand>
</feature>
<feature type="binding site" evidence="1">
    <location>
        <position position="66"/>
    </location>
    <ligand>
        <name>[4Fe-4S] cluster</name>
        <dbReference type="ChEBI" id="CHEBI:49883"/>
        <label>1</label>
    </ligand>
</feature>
<feature type="binding site" evidence="1">
    <location>
        <position position="70"/>
    </location>
    <ligand>
        <name>[4Fe-4S] cluster</name>
        <dbReference type="ChEBI" id="CHEBI:49883"/>
        <label>2</label>
    </ligand>
</feature>
<feature type="binding site" evidence="1">
    <location>
        <position position="99"/>
    </location>
    <ligand>
        <name>[4Fe-4S] cluster</name>
        <dbReference type="ChEBI" id="CHEBI:49883"/>
        <label>2</label>
    </ligand>
</feature>
<feature type="binding site" evidence="1">
    <location>
        <position position="102"/>
    </location>
    <ligand>
        <name>[4Fe-4S] cluster</name>
        <dbReference type="ChEBI" id="CHEBI:49883"/>
        <label>2</label>
    </ligand>
</feature>
<feature type="binding site" evidence="1">
    <location>
        <position position="105"/>
    </location>
    <ligand>
        <name>[4Fe-4S] cluster</name>
        <dbReference type="ChEBI" id="CHEBI:49883"/>
        <label>2</label>
    </ligand>
</feature>
<feature type="binding site" evidence="1">
    <location>
        <position position="109"/>
    </location>
    <ligand>
        <name>[4Fe-4S] cluster</name>
        <dbReference type="ChEBI" id="CHEBI:49883"/>
        <label>1</label>
    </ligand>
</feature>
<organism>
    <name type="scientific">Rickettsia conorii (strain ATCC VR-613 / Malish 7)</name>
    <dbReference type="NCBI Taxonomy" id="272944"/>
    <lineage>
        <taxon>Bacteria</taxon>
        <taxon>Pseudomonadati</taxon>
        <taxon>Pseudomonadota</taxon>
        <taxon>Alphaproteobacteria</taxon>
        <taxon>Rickettsiales</taxon>
        <taxon>Rickettsiaceae</taxon>
        <taxon>Rickettsieae</taxon>
        <taxon>Rickettsia</taxon>
        <taxon>spotted fever group</taxon>
    </lineage>
</organism>
<gene>
    <name evidence="1" type="primary">nuoI</name>
    <name type="ordered locus">RC1229</name>
</gene>